<accession>Q5P7N1</accession>
<feature type="chain" id="PRO_0000055344" description="Protein-export protein SecB">
    <location>
        <begin position="1"/>
        <end position="159"/>
    </location>
</feature>
<keyword id="KW-0143">Chaperone</keyword>
<keyword id="KW-0963">Cytoplasm</keyword>
<keyword id="KW-0653">Protein transport</keyword>
<keyword id="KW-1185">Reference proteome</keyword>
<keyword id="KW-0811">Translocation</keyword>
<keyword id="KW-0813">Transport</keyword>
<evidence type="ECO:0000255" key="1">
    <source>
        <dbReference type="HAMAP-Rule" id="MF_00821"/>
    </source>
</evidence>
<proteinExistence type="inferred from homology"/>
<protein>
    <recommendedName>
        <fullName evidence="1">Protein-export protein SecB</fullName>
    </recommendedName>
</protein>
<comment type="function">
    <text evidence="1">One of the proteins required for the normal export of preproteins out of the cell cytoplasm. It is a molecular chaperone that binds to a subset of precursor proteins, maintaining them in a translocation-competent state. It also specifically binds to its receptor SecA.</text>
</comment>
<comment type="subunit">
    <text evidence="1">Homotetramer, a dimer of dimers. One homotetramer interacts with 1 SecA dimer.</text>
</comment>
<comment type="subcellular location">
    <subcellularLocation>
        <location evidence="1">Cytoplasm</location>
    </subcellularLocation>
</comment>
<comment type="similarity">
    <text evidence="1">Belongs to the SecB family.</text>
</comment>
<organism>
    <name type="scientific">Aromatoleum aromaticum (strain DSM 19018 / LMG 30748 / EbN1)</name>
    <name type="common">Azoarcus sp. (strain EbN1)</name>
    <dbReference type="NCBI Taxonomy" id="76114"/>
    <lineage>
        <taxon>Bacteria</taxon>
        <taxon>Pseudomonadati</taxon>
        <taxon>Pseudomonadota</taxon>
        <taxon>Betaproteobacteria</taxon>
        <taxon>Rhodocyclales</taxon>
        <taxon>Rhodocyclaceae</taxon>
        <taxon>Aromatoleum</taxon>
    </lineage>
</organism>
<name>SECB_AROAE</name>
<sequence>MTENAQAAQPVFSIEKLYVKDLSLEVPNAPKIFLDRENPQINVQLRTEASNVDEGVFEVTLTVTVSSKLPEDRTVFLVEVAQAGIFQIRNIPEGDLEAVMMIGCPNILFPYARESVSDAITRAGFQPVVLAPVNFESLYQAQQQQQAAAAAQAGELPIQ</sequence>
<dbReference type="EMBL" id="CR555306">
    <property type="protein sequence ID" value="CAI06680.1"/>
    <property type="molecule type" value="Genomic_DNA"/>
</dbReference>
<dbReference type="RefSeq" id="WP_011236410.1">
    <property type="nucleotide sequence ID" value="NC_006513.1"/>
</dbReference>
<dbReference type="SMR" id="Q5P7N1"/>
<dbReference type="STRING" id="76114.ebA1056"/>
<dbReference type="KEGG" id="eba:ebA1056"/>
<dbReference type="eggNOG" id="COG1952">
    <property type="taxonomic scope" value="Bacteria"/>
</dbReference>
<dbReference type="HOGENOM" id="CLU_111574_1_0_4"/>
<dbReference type="OrthoDB" id="9795145at2"/>
<dbReference type="Proteomes" id="UP000006552">
    <property type="component" value="Chromosome"/>
</dbReference>
<dbReference type="GO" id="GO:0005737">
    <property type="term" value="C:cytoplasm"/>
    <property type="evidence" value="ECO:0007669"/>
    <property type="project" value="UniProtKB-SubCell"/>
</dbReference>
<dbReference type="GO" id="GO:0051082">
    <property type="term" value="F:unfolded protein binding"/>
    <property type="evidence" value="ECO:0007669"/>
    <property type="project" value="InterPro"/>
</dbReference>
<dbReference type="GO" id="GO:0006457">
    <property type="term" value="P:protein folding"/>
    <property type="evidence" value="ECO:0007669"/>
    <property type="project" value="UniProtKB-UniRule"/>
</dbReference>
<dbReference type="GO" id="GO:0051262">
    <property type="term" value="P:protein tetramerization"/>
    <property type="evidence" value="ECO:0007669"/>
    <property type="project" value="InterPro"/>
</dbReference>
<dbReference type="GO" id="GO:0015031">
    <property type="term" value="P:protein transport"/>
    <property type="evidence" value="ECO:0007669"/>
    <property type="project" value="UniProtKB-UniRule"/>
</dbReference>
<dbReference type="Gene3D" id="3.10.420.10">
    <property type="entry name" value="SecB-like"/>
    <property type="match status" value="1"/>
</dbReference>
<dbReference type="HAMAP" id="MF_00821">
    <property type="entry name" value="SecB"/>
    <property type="match status" value="1"/>
</dbReference>
<dbReference type="InterPro" id="IPR003708">
    <property type="entry name" value="SecB"/>
</dbReference>
<dbReference type="InterPro" id="IPR035958">
    <property type="entry name" value="SecB-like_sf"/>
</dbReference>
<dbReference type="NCBIfam" id="NF004392">
    <property type="entry name" value="PRK05751.1-3"/>
    <property type="match status" value="1"/>
</dbReference>
<dbReference type="NCBIfam" id="NF004394">
    <property type="entry name" value="PRK05751.1-5"/>
    <property type="match status" value="1"/>
</dbReference>
<dbReference type="NCBIfam" id="TIGR00809">
    <property type="entry name" value="secB"/>
    <property type="match status" value="1"/>
</dbReference>
<dbReference type="PANTHER" id="PTHR36918">
    <property type="match status" value="1"/>
</dbReference>
<dbReference type="PANTHER" id="PTHR36918:SF1">
    <property type="entry name" value="PROTEIN-EXPORT PROTEIN SECB"/>
    <property type="match status" value="1"/>
</dbReference>
<dbReference type="Pfam" id="PF02556">
    <property type="entry name" value="SecB"/>
    <property type="match status" value="1"/>
</dbReference>
<dbReference type="PRINTS" id="PR01594">
    <property type="entry name" value="SECBCHAPRONE"/>
</dbReference>
<dbReference type="SUPFAM" id="SSF54611">
    <property type="entry name" value="SecB-like"/>
    <property type="match status" value="1"/>
</dbReference>
<reference key="1">
    <citation type="journal article" date="2005" name="Arch. Microbiol.">
        <title>The genome sequence of an anaerobic aromatic-degrading denitrifying bacterium, strain EbN1.</title>
        <authorList>
            <person name="Rabus R."/>
            <person name="Kube M."/>
            <person name="Heider J."/>
            <person name="Beck A."/>
            <person name="Heitmann K."/>
            <person name="Widdel F."/>
            <person name="Reinhardt R."/>
        </authorList>
    </citation>
    <scope>NUCLEOTIDE SEQUENCE [LARGE SCALE GENOMIC DNA]</scope>
    <source>
        <strain>DSM 19018 / LMG 30748 / EbN1</strain>
    </source>
</reference>
<gene>
    <name evidence="1" type="primary">secB</name>
    <name type="ordered locus">AZOSEA05580</name>
    <name type="ORF">ebA1056</name>
</gene>